<evidence type="ECO:0000255" key="1">
    <source>
        <dbReference type="HAMAP-Rule" id="MF_00187"/>
    </source>
</evidence>
<evidence type="ECO:0000305" key="2"/>
<proteinExistence type="inferred from homology"/>
<name>FDHD_SALTI</name>
<accession>Q8Z2U7</accession>
<sequence length="278" mass="30246">MNNILSEEVLNVTDFTTSRQLTLWKREDLQSSQLDDVAEEVPVALVYNGISHVVMMASPKDLTHFAMGFSLSEGIIDSPREIYGMDVVPSCNGLEVQIDLSSRRFMGLKARRRALAGRTGCGVCGVEQLNDIGKPVQPLPFSQTFNLGNLDRALKHLNDFQPTGKLTGCTHAAAWVMPSGELAGGHEDVGRHVALDKLLGRRATEGEEWRQGAALVSSRASYEMVQKSAMCGVEILFAVSAATTLAVDVAERCNLTLVGFCKPGRATIYTHPQRLIAD</sequence>
<comment type="function">
    <text evidence="1">Required for formate dehydrogenase (FDH) activity. Acts as a sulfur carrier protein that transfers sulfur from IscS to the molybdenum cofactor prior to its insertion into FDH.</text>
</comment>
<comment type="subcellular location">
    <subcellularLocation>
        <location evidence="1">Cytoplasm</location>
    </subcellularLocation>
</comment>
<comment type="similarity">
    <text evidence="1">Belongs to the FdhD family.</text>
</comment>
<comment type="sequence caution" evidence="2">
    <conflict type="erroneous initiation">
        <sequence resource="EMBL-CDS" id="AAO71085"/>
    </conflict>
</comment>
<comment type="sequence caution" evidence="2">
    <conflict type="erroneous initiation">
        <sequence resource="EMBL-CDS" id="CAD09587"/>
    </conflict>
</comment>
<feature type="chain" id="PRO_0000152918" description="Sulfur carrier protein FdhD">
    <location>
        <begin position="1"/>
        <end position="278"/>
    </location>
</feature>
<feature type="active site" description="Cysteine persulfide intermediate" evidence="1">
    <location>
        <position position="121"/>
    </location>
</feature>
<feature type="binding site" evidence="1">
    <location>
        <begin position="260"/>
        <end position="265"/>
    </location>
    <ligand>
        <name>Mo-bis(molybdopterin guanine dinucleotide)</name>
        <dbReference type="ChEBI" id="CHEBI:60539"/>
    </ligand>
</feature>
<protein>
    <recommendedName>
        <fullName evidence="1">Sulfur carrier protein FdhD</fullName>
    </recommendedName>
</protein>
<reference key="1">
    <citation type="journal article" date="2001" name="Nature">
        <title>Complete genome sequence of a multiple drug resistant Salmonella enterica serovar Typhi CT18.</title>
        <authorList>
            <person name="Parkhill J."/>
            <person name="Dougan G."/>
            <person name="James K.D."/>
            <person name="Thomson N.R."/>
            <person name="Pickard D."/>
            <person name="Wain J."/>
            <person name="Churcher C.M."/>
            <person name="Mungall K.L."/>
            <person name="Bentley S.D."/>
            <person name="Holden M.T.G."/>
            <person name="Sebaihia M."/>
            <person name="Baker S."/>
            <person name="Basham D."/>
            <person name="Brooks K."/>
            <person name="Chillingworth T."/>
            <person name="Connerton P."/>
            <person name="Cronin A."/>
            <person name="Davis P."/>
            <person name="Davies R.M."/>
            <person name="Dowd L."/>
            <person name="White N."/>
            <person name="Farrar J."/>
            <person name="Feltwell T."/>
            <person name="Hamlin N."/>
            <person name="Haque A."/>
            <person name="Hien T.T."/>
            <person name="Holroyd S."/>
            <person name="Jagels K."/>
            <person name="Krogh A."/>
            <person name="Larsen T.S."/>
            <person name="Leather S."/>
            <person name="Moule S."/>
            <person name="O'Gaora P."/>
            <person name="Parry C."/>
            <person name="Quail M.A."/>
            <person name="Rutherford K.M."/>
            <person name="Simmonds M."/>
            <person name="Skelton J."/>
            <person name="Stevens K."/>
            <person name="Whitehead S."/>
            <person name="Barrell B.G."/>
        </authorList>
    </citation>
    <scope>NUCLEOTIDE SEQUENCE [LARGE SCALE GENOMIC DNA]</scope>
    <source>
        <strain>CT18</strain>
    </source>
</reference>
<reference key="2">
    <citation type="journal article" date="2003" name="J. Bacteriol.">
        <title>Comparative genomics of Salmonella enterica serovar Typhi strains Ty2 and CT18.</title>
        <authorList>
            <person name="Deng W."/>
            <person name="Liou S.-R."/>
            <person name="Plunkett G. III"/>
            <person name="Mayhew G.F."/>
            <person name="Rose D.J."/>
            <person name="Burland V."/>
            <person name="Kodoyianni V."/>
            <person name="Schwartz D.C."/>
            <person name="Blattner F.R."/>
        </authorList>
    </citation>
    <scope>NUCLEOTIDE SEQUENCE [LARGE SCALE GENOMIC DNA]</scope>
    <source>
        <strain>ATCC 700931 / Ty2</strain>
    </source>
</reference>
<gene>
    <name evidence="1" type="primary">fdhD</name>
    <name type="ordered locus">STY3838</name>
    <name type="ordered locus">t3582</name>
</gene>
<keyword id="KW-0963">Cytoplasm</keyword>
<keyword id="KW-0501">Molybdenum cofactor biosynthesis</keyword>
<organism>
    <name type="scientific">Salmonella typhi</name>
    <dbReference type="NCBI Taxonomy" id="90370"/>
    <lineage>
        <taxon>Bacteria</taxon>
        <taxon>Pseudomonadati</taxon>
        <taxon>Pseudomonadota</taxon>
        <taxon>Gammaproteobacteria</taxon>
        <taxon>Enterobacterales</taxon>
        <taxon>Enterobacteriaceae</taxon>
        <taxon>Salmonella</taxon>
    </lineage>
</organism>
<dbReference type="EMBL" id="AL513382">
    <property type="protein sequence ID" value="CAD09587.1"/>
    <property type="status" value="ALT_INIT"/>
    <property type="molecule type" value="Genomic_DNA"/>
</dbReference>
<dbReference type="EMBL" id="AE014613">
    <property type="protein sequence ID" value="AAO71085.1"/>
    <property type="status" value="ALT_INIT"/>
    <property type="molecule type" value="Genomic_DNA"/>
</dbReference>
<dbReference type="RefSeq" id="NP_458012.1">
    <property type="nucleotide sequence ID" value="NC_003198.1"/>
</dbReference>
<dbReference type="RefSeq" id="WP_001059746.1">
    <property type="nucleotide sequence ID" value="NZ_WSUR01000010.1"/>
</dbReference>
<dbReference type="SMR" id="Q8Z2U7"/>
<dbReference type="STRING" id="220341.gene:17587698"/>
<dbReference type="KEGG" id="stt:t3582"/>
<dbReference type="KEGG" id="sty:STY3838"/>
<dbReference type="PATRIC" id="fig|220341.7.peg.3918"/>
<dbReference type="eggNOG" id="COG1526">
    <property type="taxonomic scope" value="Bacteria"/>
</dbReference>
<dbReference type="HOGENOM" id="CLU_056887_2_0_6"/>
<dbReference type="OMA" id="RYCAGAT"/>
<dbReference type="OrthoDB" id="3197277at2"/>
<dbReference type="Proteomes" id="UP000000541">
    <property type="component" value="Chromosome"/>
</dbReference>
<dbReference type="Proteomes" id="UP000002670">
    <property type="component" value="Chromosome"/>
</dbReference>
<dbReference type="GO" id="GO:0005737">
    <property type="term" value="C:cytoplasm"/>
    <property type="evidence" value="ECO:0007669"/>
    <property type="project" value="UniProtKB-SubCell"/>
</dbReference>
<dbReference type="GO" id="GO:0097163">
    <property type="term" value="F:sulfur carrier activity"/>
    <property type="evidence" value="ECO:0007669"/>
    <property type="project" value="UniProtKB-UniRule"/>
</dbReference>
<dbReference type="GO" id="GO:0016783">
    <property type="term" value="F:sulfurtransferase activity"/>
    <property type="evidence" value="ECO:0007669"/>
    <property type="project" value="InterPro"/>
</dbReference>
<dbReference type="GO" id="GO:0006777">
    <property type="term" value="P:Mo-molybdopterin cofactor biosynthetic process"/>
    <property type="evidence" value="ECO:0007669"/>
    <property type="project" value="UniProtKB-UniRule"/>
</dbReference>
<dbReference type="Gene3D" id="3.10.20.10">
    <property type="match status" value="1"/>
</dbReference>
<dbReference type="Gene3D" id="3.40.140.10">
    <property type="entry name" value="Cytidine Deaminase, domain 2"/>
    <property type="match status" value="1"/>
</dbReference>
<dbReference type="HAMAP" id="MF_00187">
    <property type="entry name" value="FdhD"/>
    <property type="match status" value="1"/>
</dbReference>
<dbReference type="InterPro" id="IPR016193">
    <property type="entry name" value="Cytidine_deaminase-like"/>
</dbReference>
<dbReference type="InterPro" id="IPR003786">
    <property type="entry name" value="FdhD"/>
</dbReference>
<dbReference type="NCBIfam" id="TIGR00129">
    <property type="entry name" value="fdhD_narQ"/>
    <property type="match status" value="1"/>
</dbReference>
<dbReference type="PANTHER" id="PTHR30592">
    <property type="entry name" value="FORMATE DEHYDROGENASE"/>
    <property type="match status" value="1"/>
</dbReference>
<dbReference type="PANTHER" id="PTHR30592:SF1">
    <property type="entry name" value="SULFUR CARRIER PROTEIN FDHD"/>
    <property type="match status" value="1"/>
</dbReference>
<dbReference type="Pfam" id="PF02634">
    <property type="entry name" value="FdhD-NarQ"/>
    <property type="match status" value="1"/>
</dbReference>
<dbReference type="PIRSF" id="PIRSF015626">
    <property type="entry name" value="FdhD"/>
    <property type="match status" value="1"/>
</dbReference>
<dbReference type="SUPFAM" id="SSF53927">
    <property type="entry name" value="Cytidine deaminase-like"/>
    <property type="match status" value="1"/>
</dbReference>